<accession>Q8VZR0</accession>
<name>RIBF2_ARATH</name>
<dbReference type="EC" id="2.7.7.2" evidence="3"/>
<dbReference type="EMBL" id="EU687458">
    <property type="protein sequence ID" value="ACH56224.1"/>
    <property type="molecule type" value="mRNA"/>
</dbReference>
<dbReference type="EMBL" id="AL392174">
    <property type="status" value="NOT_ANNOTATED_CDS"/>
    <property type="molecule type" value="Genomic_DNA"/>
</dbReference>
<dbReference type="EMBL" id="CP002688">
    <property type="protein sequence ID" value="AED91286.1"/>
    <property type="molecule type" value="Genomic_DNA"/>
</dbReference>
<dbReference type="EMBL" id="AY063929">
    <property type="protein sequence ID" value="AAL36285.1"/>
    <property type="molecule type" value="mRNA"/>
</dbReference>
<dbReference type="EMBL" id="AY091253">
    <property type="protein sequence ID" value="AAM14192.1"/>
    <property type="molecule type" value="mRNA"/>
</dbReference>
<dbReference type="RefSeq" id="NP_568192.2">
    <molecule id="Q8VZR0-1"/>
    <property type="nucleotide sequence ID" value="NM_120918.5"/>
</dbReference>
<dbReference type="SMR" id="Q8VZR0"/>
<dbReference type="FunCoup" id="Q8VZR0">
    <property type="interactions" value="411"/>
</dbReference>
<dbReference type="STRING" id="3702.Q8VZR0"/>
<dbReference type="PaxDb" id="3702-AT5G08340.1"/>
<dbReference type="ProteomicsDB" id="236187">
    <molecule id="Q8VZR0-1"/>
</dbReference>
<dbReference type="EnsemblPlants" id="AT5G08340.1">
    <molecule id="Q8VZR0-1"/>
    <property type="protein sequence ID" value="AT5G08340.1"/>
    <property type="gene ID" value="AT5G08340"/>
</dbReference>
<dbReference type="GeneID" id="830732"/>
<dbReference type="Gramene" id="AT5G08340.1">
    <molecule id="Q8VZR0-1"/>
    <property type="protein sequence ID" value="AT5G08340.1"/>
    <property type="gene ID" value="AT5G08340"/>
</dbReference>
<dbReference type="KEGG" id="ath:AT5G08340"/>
<dbReference type="Araport" id="AT5G08340"/>
<dbReference type="TAIR" id="AT5G08340"/>
<dbReference type="eggNOG" id="KOG2628">
    <property type="taxonomic scope" value="Eukaryota"/>
</dbReference>
<dbReference type="InParanoid" id="Q8VZR0"/>
<dbReference type="PhylomeDB" id="Q8VZR0"/>
<dbReference type="BRENDA" id="2.7.7.2">
    <property type="organism ID" value="399"/>
</dbReference>
<dbReference type="UniPathway" id="UPA00277">
    <property type="reaction ID" value="UER00407"/>
</dbReference>
<dbReference type="PRO" id="PR:Q8VZR0"/>
<dbReference type="Proteomes" id="UP000006548">
    <property type="component" value="Chromosome 5"/>
</dbReference>
<dbReference type="ExpressionAtlas" id="Q8VZR0">
    <property type="expression patterns" value="baseline and differential"/>
</dbReference>
<dbReference type="GO" id="GO:0009507">
    <property type="term" value="C:chloroplast"/>
    <property type="evidence" value="ECO:0000314"/>
    <property type="project" value="UniProtKB"/>
</dbReference>
<dbReference type="GO" id="GO:0005524">
    <property type="term" value="F:ATP binding"/>
    <property type="evidence" value="ECO:0007669"/>
    <property type="project" value="UniProtKB-KW"/>
</dbReference>
<dbReference type="GO" id="GO:0003919">
    <property type="term" value="F:FMN adenylyltransferase activity"/>
    <property type="evidence" value="ECO:0000314"/>
    <property type="project" value="UniProtKB"/>
</dbReference>
<dbReference type="GO" id="GO:0006747">
    <property type="term" value="P:FAD biosynthetic process"/>
    <property type="evidence" value="ECO:0000314"/>
    <property type="project" value="UniProtKB"/>
</dbReference>
<dbReference type="GO" id="GO:0009231">
    <property type="term" value="P:riboflavin biosynthetic process"/>
    <property type="evidence" value="ECO:0007669"/>
    <property type="project" value="InterPro"/>
</dbReference>
<dbReference type="FunFam" id="3.40.50.620:FF:000307">
    <property type="entry name" value="FAD synthetase 1, chloroplastic"/>
    <property type="match status" value="1"/>
</dbReference>
<dbReference type="Gene3D" id="3.40.50.620">
    <property type="entry name" value="HUPs"/>
    <property type="match status" value="1"/>
</dbReference>
<dbReference type="InterPro" id="IPR015864">
    <property type="entry name" value="FAD_synthase"/>
</dbReference>
<dbReference type="InterPro" id="IPR014729">
    <property type="entry name" value="Rossmann-like_a/b/a_fold"/>
</dbReference>
<dbReference type="PANTHER" id="PTHR12714:SF20">
    <property type="entry name" value="FAD SYNTHETASE 1, CHLOROPLASTIC-RELATED"/>
    <property type="match status" value="1"/>
</dbReference>
<dbReference type="PANTHER" id="PTHR12714">
    <property type="entry name" value="PROTEIN-S ISOPRENYLCYSTEINE O-METHYLTRANSFERASE"/>
    <property type="match status" value="1"/>
</dbReference>
<dbReference type="Pfam" id="PF06574">
    <property type="entry name" value="FAD_syn"/>
    <property type="match status" value="1"/>
</dbReference>
<dbReference type="SUPFAM" id="SSF52374">
    <property type="entry name" value="Nucleotidylyl transferase"/>
    <property type="match status" value="1"/>
</dbReference>
<protein>
    <recommendedName>
        <fullName evidence="4">FAD synthetase 2, chloroplastic</fullName>
        <ecNumber evidence="3">2.7.7.2</ecNumber>
    </recommendedName>
    <alternativeName>
        <fullName evidence="4">AtRibF2</fullName>
    </alternativeName>
    <alternativeName>
        <fullName evidence="4">FAD pyrophosphorylase 2</fullName>
    </alternativeName>
    <alternativeName>
        <fullName evidence="4">FMN adenylyltransferase 2</fullName>
    </alternativeName>
    <alternativeName>
        <fullName evidence="4">Flavin adenine dinucleotide synthase 2</fullName>
    </alternativeName>
</protein>
<organism>
    <name type="scientific">Arabidopsis thaliana</name>
    <name type="common">Mouse-ear cress</name>
    <dbReference type="NCBI Taxonomy" id="3702"/>
    <lineage>
        <taxon>Eukaryota</taxon>
        <taxon>Viridiplantae</taxon>
        <taxon>Streptophyta</taxon>
        <taxon>Embryophyta</taxon>
        <taxon>Tracheophyta</taxon>
        <taxon>Spermatophyta</taxon>
        <taxon>Magnoliopsida</taxon>
        <taxon>eudicotyledons</taxon>
        <taxon>Gunneridae</taxon>
        <taxon>Pentapetalae</taxon>
        <taxon>rosids</taxon>
        <taxon>malvids</taxon>
        <taxon>Brassicales</taxon>
        <taxon>Brassicaceae</taxon>
        <taxon>Camelineae</taxon>
        <taxon>Arabidopsis</taxon>
    </lineage>
</organism>
<reference key="1">
    <citation type="journal article" date="2008" name="J. Biol. Chem.">
        <title>Flavin nucleotide metabolism in plants: monofunctional enzymes synthesize fad in plastids.</title>
        <authorList>
            <person name="Sandoval F.J."/>
            <person name="Zhang Y."/>
            <person name="Roje S."/>
        </authorList>
    </citation>
    <scope>NUCLEOTIDE SEQUENCE [MRNA]</scope>
    <scope>FUNCTION</scope>
    <scope>CATALYTIC ACTIVITY</scope>
    <scope>PATHWAY</scope>
    <scope>SUBCELLULAR LOCATION</scope>
    <scope>BIOPHYSICOCHEMICAL PROPERTIES</scope>
    <source>
        <strain>cv. Columbia</strain>
    </source>
</reference>
<reference key="2">
    <citation type="journal article" date="2000" name="Nature">
        <title>Sequence and analysis of chromosome 5 of the plant Arabidopsis thaliana.</title>
        <authorList>
            <person name="Tabata S."/>
            <person name="Kaneko T."/>
            <person name="Nakamura Y."/>
            <person name="Kotani H."/>
            <person name="Kato T."/>
            <person name="Asamizu E."/>
            <person name="Miyajima N."/>
            <person name="Sasamoto S."/>
            <person name="Kimura T."/>
            <person name="Hosouchi T."/>
            <person name="Kawashima K."/>
            <person name="Kohara M."/>
            <person name="Matsumoto M."/>
            <person name="Matsuno A."/>
            <person name="Muraki A."/>
            <person name="Nakayama S."/>
            <person name="Nakazaki N."/>
            <person name="Naruo K."/>
            <person name="Okumura S."/>
            <person name="Shinpo S."/>
            <person name="Takeuchi C."/>
            <person name="Wada T."/>
            <person name="Watanabe A."/>
            <person name="Yamada M."/>
            <person name="Yasuda M."/>
            <person name="Sato S."/>
            <person name="de la Bastide M."/>
            <person name="Huang E."/>
            <person name="Spiegel L."/>
            <person name="Gnoj L."/>
            <person name="O'Shaughnessy A."/>
            <person name="Preston R."/>
            <person name="Habermann K."/>
            <person name="Murray J."/>
            <person name="Johnson D."/>
            <person name="Rohlfing T."/>
            <person name="Nelson J."/>
            <person name="Stoneking T."/>
            <person name="Pepin K."/>
            <person name="Spieth J."/>
            <person name="Sekhon M."/>
            <person name="Armstrong J."/>
            <person name="Becker M."/>
            <person name="Belter E."/>
            <person name="Cordum H."/>
            <person name="Cordes M."/>
            <person name="Courtney L."/>
            <person name="Courtney W."/>
            <person name="Dante M."/>
            <person name="Du H."/>
            <person name="Edwards J."/>
            <person name="Fryman J."/>
            <person name="Haakensen B."/>
            <person name="Lamar E."/>
            <person name="Latreille P."/>
            <person name="Leonard S."/>
            <person name="Meyer R."/>
            <person name="Mulvaney E."/>
            <person name="Ozersky P."/>
            <person name="Riley A."/>
            <person name="Strowmatt C."/>
            <person name="Wagner-McPherson C."/>
            <person name="Wollam A."/>
            <person name="Yoakum M."/>
            <person name="Bell M."/>
            <person name="Dedhia N."/>
            <person name="Parnell L."/>
            <person name="Shah R."/>
            <person name="Rodriguez M."/>
            <person name="Hoon See L."/>
            <person name="Vil D."/>
            <person name="Baker J."/>
            <person name="Kirchoff K."/>
            <person name="Toth K."/>
            <person name="King L."/>
            <person name="Bahret A."/>
            <person name="Miller B."/>
            <person name="Marra M.A."/>
            <person name="Martienssen R."/>
            <person name="McCombie W.R."/>
            <person name="Wilson R.K."/>
            <person name="Murphy G."/>
            <person name="Bancroft I."/>
            <person name="Volckaert G."/>
            <person name="Wambutt R."/>
            <person name="Duesterhoeft A."/>
            <person name="Stiekema W."/>
            <person name="Pohl T."/>
            <person name="Entian K.-D."/>
            <person name="Terryn N."/>
            <person name="Hartley N."/>
            <person name="Bent E."/>
            <person name="Johnson S."/>
            <person name="Langham S.-A."/>
            <person name="McCullagh B."/>
            <person name="Robben J."/>
            <person name="Grymonprez B."/>
            <person name="Zimmermann W."/>
            <person name="Ramsperger U."/>
            <person name="Wedler H."/>
            <person name="Balke K."/>
            <person name="Wedler E."/>
            <person name="Peters S."/>
            <person name="van Staveren M."/>
            <person name="Dirkse W."/>
            <person name="Mooijman P."/>
            <person name="Klein Lankhorst R."/>
            <person name="Weitzenegger T."/>
            <person name="Bothe G."/>
            <person name="Rose M."/>
            <person name="Hauf J."/>
            <person name="Berneiser S."/>
            <person name="Hempel S."/>
            <person name="Feldpausch M."/>
            <person name="Lamberth S."/>
            <person name="Villarroel R."/>
            <person name="Gielen J."/>
            <person name="Ardiles W."/>
            <person name="Bents O."/>
            <person name="Lemcke K."/>
            <person name="Kolesov G."/>
            <person name="Mayer K.F.X."/>
            <person name="Rudd S."/>
            <person name="Schoof H."/>
            <person name="Schueller C."/>
            <person name="Zaccaria P."/>
            <person name="Mewes H.-W."/>
            <person name="Bevan M."/>
            <person name="Fransz P.F."/>
        </authorList>
    </citation>
    <scope>NUCLEOTIDE SEQUENCE [LARGE SCALE GENOMIC DNA]</scope>
    <source>
        <strain>cv. Columbia</strain>
    </source>
</reference>
<reference key="3">
    <citation type="journal article" date="2017" name="Plant J.">
        <title>Araport11: a complete reannotation of the Arabidopsis thaliana reference genome.</title>
        <authorList>
            <person name="Cheng C.Y."/>
            <person name="Krishnakumar V."/>
            <person name="Chan A.P."/>
            <person name="Thibaud-Nissen F."/>
            <person name="Schobel S."/>
            <person name="Town C.D."/>
        </authorList>
    </citation>
    <scope>GENOME REANNOTATION</scope>
    <source>
        <strain>cv. Columbia</strain>
    </source>
</reference>
<reference key="4">
    <citation type="journal article" date="2003" name="Science">
        <title>Empirical analysis of transcriptional activity in the Arabidopsis genome.</title>
        <authorList>
            <person name="Yamada K."/>
            <person name="Lim J."/>
            <person name="Dale J.M."/>
            <person name="Chen H."/>
            <person name="Shinn P."/>
            <person name="Palm C.J."/>
            <person name="Southwick A.M."/>
            <person name="Wu H.C."/>
            <person name="Kim C.J."/>
            <person name="Nguyen M."/>
            <person name="Pham P.K."/>
            <person name="Cheuk R.F."/>
            <person name="Karlin-Newmann G."/>
            <person name="Liu S.X."/>
            <person name="Lam B."/>
            <person name="Sakano H."/>
            <person name="Wu T."/>
            <person name="Yu G."/>
            <person name="Miranda M."/>
            <person name="Quach H.L."/>
            <person name="Tripp M."/>
            <person name="Chang C.H."/>
            <person name="Lee J.M."/>
            <person name="Toriumi M.J."/>
            <person name="Chan M.M."/>
            <person name="Tang C.C."/>
            <person name="Onodera C.S."/>
            <person name="Deng J.M."/>
            <person name="Akiyama K."/>
            <person name="Ansari Y."/>
            <person name="Arakawa T."/>
            <person name="Banh J."/>
            <person name="Banno F."/>
            <person name="Bowser L."/>
            <person name="Brooks S.Y."/>
            <person name="Carninci P."/>
            <person name="Chao Q."/>
            <person name="Choy N."/>
            <person name="Enju A."/>
            <person name="Goldsmith A.D."/>
            <person name="Gurjal M."/>
            <person name="Hansen N.F."/>
            <person name="Hayashizaki Y."/>
            <person name="Johnson-Hopson C."/>
            <person name="Hsuan V.W."/>
            <person name="Iida K."/>
            <person name="Karnes M."/>
            <person name="Khan S."/>
            <person name="Koesema E."/>
            <person name="Ishida J."/>
            <person name="Jiang P.X."/>
            <person name="Jones T."/>
            <person name="Kawai J."/>
            <person name="Kamiya A."/>
            <person name="Meyers C."/>
            <person name="Nakajima M."/>
            <person name="Narusaka M."/>
            <person name="Seki M."/>
            <person name="Sakurai T."/>
            <person name="Satou M."/>
            <person name="Tamse R."/>
            <person name="Vaysberg M."/>
            <person name="Wallender E.K."/>
            <person name="Wong C."/>
            <person name="Yamamura Y."/>
            <person name="Yuan S."/>
            <person name="Shinozaki K."/>
            <person name="Davis R.W."/>
            <person name="Theologis A."/>
            <person name="Ecker J.R."/>
        </authorList>
    </citation>
    <scope>NUCLEOTIDE SEQUENCE [LARGE SCALE MRNA]</scope>
    <source>
        <strain>cv. Columbia</strain>
    </source>
</reference>
<gene>
    <name evidence="4" type="primary">RIBF2</name>
    <name evidence="5" type="ordered locus">At5g08340</name>
    <name evidence="6" type="ORF">F8L15</name>
</gene>
<feature type="transit peptide" description="Chloroplast" evidence="2">
    <location>
        <begin position="1"/>
        <end position="57"/>
    </location>
</feature>
<feature type="chain" id="PRO_0000429027" description="FAD synthetase 2, chloroplastic">
    <location>
        <begin position="58"/>
        <end position="367"/>
    </location>
</feature>
<sequence length="367" mass="40528">MLCGGSRVLQHLSDHNHHNSIGLGLGFCGAKIVQLSSFFLRPSQAMAKSHHFSRKLRQRMISSFGSHCRTSGEVPILHNCFSQREDDPELPVEGLSPVSGGIVALGKFDALHIGHRELTIQASRIGAPYLLSFVGMAEVLGWEPRAPIVAKCDRQRVLTSWASYCGDRAPEEYEIEFASVRHLTPRQFVEKLSKELRVCGVVAGENYRFGYKASGDASELVRLCEECGITACIINSVMDMKQGSAKRDSGDSKDRGQVSSTRVRQALAAGDMRYVSELLGRAHRLILRVRTQDMPSERMISVPRSSILNLPPGIGIYKACLLLVGDESSVPCTVVVDTSNIHVETEEVRLCNLDWSQEFRLVSVEFG</sequence>
<comment type="function">
    <text evidence="3">Catalyzes the adenylation of flavin mononucleotide (FMN) to form flavin adenine dinucleotide (FAD) coenzyme.</text>
</comment>
<comment type="catalytic activity">
    <reaction evidence="3">
        <text>FMN + ATP + H(+) = FAD + diphosphate</text>
        <dbReference type="Rhea" id="RHEA:17237"/>
        <dbReference type="ChEBI" id="CHEBI:15378"/>
        <dbReference type="ChEBI" id="CHEBI:30616"/>
        <dbReference type="ChEBI" id="CHEBI:33019"/>
        <dbReference type="ChEBI" id="CHEBI:57692"/>
        <dbReference type="ChEBI" id="CHEBI:58210"/>
        <dbReference type="EC" id="2.7.7.2"/>
    </reaction>
    <physiologicalReaction direction="left-to-right" evidence="3">
        <dbReference type="Rhea" id="RHEA:17238"/>
    </physiologicalReaction>
</comment>
<comment type="cofactor">
    <cofactor evidence="1">
        <name>Mg(2+)</name>
        <dbReference type="ChEBI" id="CHEBI:18420"/>
    </cofactor>
</comment>
<comment type="biophysicochemical properties">
    <kinetics>
        <KM evidence="3">20.8 uM for FMN</KM>
        <KM evidence="3">13.1 uM for ATP</KM>
        <text evidence="3">kcat is 1.28x10(-1) sec(-1) with FMN as substrate (PubMed:18713732). kcat is 1.28x10(-1) sec(-1) with ATP as substrate (PubMed:18713732).</text>
    </kinetics>
</comment>
<comment type="pathway">
    <text evidence="3">Cofactor biosynthesis; FAD biosynthesis; FAD from FMN: step 1/1.</text>
</comment>
<comment type="subcellular location">
    <subcellularLocation>
        <location evidence="3">Plastid</location>
        <location evidence="3">Chloroplast</location>
    </subcellularLocation>
</comment>
<comment type="alternative products">
    <event type="alternative splicing"/>
    <isoform>
        <id>Q8VZR0-1</id>
        <name>1</name>
        <sequence type="displayed"/>
    </isoform>
    <text>A number of isoforms are produced. According to EST sequences.</text>
</comment>
<proteinExistence type="evidence at protein level"/>
<evidence type="ECO:0000250" key="1">
    <source>
        <dbReference type="UniProtKB" id="Q969G6"/>
    </source>
</evidence>
<evidence type="ECO:0000255" key="2"/>
<evidence type="ECO:0000269" key="3">
    <source>
    </source>
</evidence>
<evidence type="ECO:0000303" key="4">
    <source>
    </source>
</evidence>
<evidence type="ECO:0000312" key="5">
    <source>
        <dbReference type="Araport" id="AT5G08340"/>
    </source>
</evidence>
<evidence type="ECO:0000312" key="6">
    <source>
        <dbReference type="EMBL" id="AL392174"/>
    </source>
</evidence>
<keyword id="KW-0025">Alternative splicing</keyword>
<keyword id="KW-0067">ATP-binding</keyword>
<keyword id="KW-0150">Chloroplast</keyword>
<keyword id="KW-0274">FAD</keyword>
<keyword id="KW-0285">Flavoprotein</keyword>
<keyword id="KW-0288">FMN</keyword>
<keyword id="KW-0547">Nucleotide-binding</keyword>
<keyword id="KW-0548">Nucleotidyltransferase</keyword>
<keyword id="KW-0934">Plastid</keyword>
<keyword id="KW-1185">Reference proteome</keyword>
<keyword id="KW-0808">Transferase</keyword>
<keyword id="KW-0809">Transit peptide</keyword>